<protein>
    <recommendedName>
        <fullName evidence="1">UvrABC system protein C</fullName>
        <shortName evidence="1">Protein UvrC</shortName>
    </recommendedName>
    <alternativeName>
        <fullName evidence="1">Excinuclease ABC subunit C</fullName>
    </alternativeName>
</protein>
<feature type="chain" id="PRO_0000138305" description="UvrABC system protein C">
    <location>
        <begin position="1"/>
        <end position="594"/>
    </location>
</feature>
<feature type="domain" description="GIY-YIG" evidence="1">
    <location>
        <begin position="13"/>
        <end position="99"/>
    </location>
</feature>
<feature type="domain" description="UVR" evidence="1">
    <location>
        <begin position="205"/>
        <end position="240"/>
    </location>
</feature>
<proteinExistence type="evidence at protein level"/>
<reference key="1">
    <citation type="journal article" date="1997" name="Nature">
        <title>The complete genome sequence of the gastric pathogen Helicobacter pylori.</title>
        <authorList>
            <person name="Tomb J.-F."/>
            <person name="White O."/>
            <person name="Kerlavage A.R."/>
            <person name="Clayton R.A."/>
            <person name="Sutton G.G."/>
            <person name="Fleischmann R.D."/>
            <person name="Ketchum K.A."/>
            <person name="Klenk H.-P."/>
            <person name="Gill S.R."/>
            <person name="Dougherty B.A."/>
            <person name="Nelson K.E."/>
            <person name="Quackenbush J."/>
            <person name="Zhou L."/>
            <person name="Kirkness E.F."/>
            <person name="Peterson S.N."/>
            <person name="Loftus B.J."/>
            <person name="Richardson D.L."/>
            <person name="Dodson R.J."/>
            <person name="Khalak H.G."/>
            <person name="Glodek A."/>
            <person name="McKenney K."/>
            <person name="FitzGerald L.M."/>
            <person name="Lee N."/>
            <person name="Adams M.D."/>
            <person name="Hickey E.K."/>
            <person name="Berg D.E."/>
            <person name="Gocayne J.D."/>
            <person name="Utterback T.R."/>
            <person name="Peterson J.D."/>
            <person name="Kelley J.M."/>
            <person name="Cotton M.D."/>
            <person name="Weidman J.F."/>
            <person name="Fujii C."/>
            <person name="Bowman C."/>
            <person name="Watthey L."/>
            <person name="Wallin E."/>
            <person name="Hayes W.S."/>
            <person name="Borodovsky M."/>
            <person name="Karp P.D."/>
            <person name="Smith H.O."/>
            <person name="Fraser C.M."/>
            <person name="Venter J.C."/>
        </authorList>
    </citation>
    <scope>NUCLEOTIDE SEQUENCE [LARGE SCALE GENOMIC DNA]</scope>
    <source>
        <strain>ATCC 700392 / 26695</strain>
    </source>
</reference>
<name>UVRC_HELPY</name>
<sequence>MADLLSSLKNLPNSSGVYQYFDKNRQLLYIGKAKNLKKRIKSYFSIRNNEITPNHRASLRIQMMVKQIAFLETILVENEQDALILENSLIKQLKPKYNILLRDDKTYPYIYMDFSTDFPIPLITRKILKQPGVKYFGPFTSGAKDILDSLYELLPLVQKKNCIKDKKACIFYQIERCKAPCENKITKEEYLKIAKECLEMIENKDRLIKELELKMERLSNNLRFEEALIYRDRIAKIQKIAPFTCMDLAKLYDLDIFAFYGASNKAVLVKMFMRGGKIISSAFEKIHSLNGFDTDEAMKQAIINHYQSHLPLMPEQILLNACSNETLKELQEFISHQYSKKIALSIPKKGDKLALIEIAMKNAQEIFSQEKTSNEDLILEEARSLFKLECMPYRVEIFDTSHHSSSQCVGGMVVYENNAFQKNSYRRYHLKGSDEYTQMSELLTRRALDFAKEPPPNLWVIDGGRAQLNIALEILKSSGSFVEVIAISKEKRDSKAYRSKGGAKDIIHTPSDTFKLLPSDKRLQWVQKLRDESHRYAINFHRSTKLKNMKQIALLKEKGIGEASVKKLLDYFGSFEAIEKASEQEKNAVLKKRI</sequence>
<dbReference type="EMBL" id="AE000511">
    <property type="protein sequence ID" value="AAD07868.1"/>
    <property type="molecule type" value="Genomic_DNA"/>
</dbReference>
<dbReference type="PIR" id="E64622">
    <property type="entry name" value="E64622"/>
</dbReference>
<dbReference type="RefSeq" id="NP_207614.1">
    <property type="nucleotide sequence ID" value="NC_000915.1"/>
</dbReference>
<dbReference type="RefSeq" id="WP_000774319.1">
    <property type="nucleotide sequence ID" value="NC_018939.1"/>
</dbReference>
<dbReference type="SMR" id="P56428"/>
<dbReference type="DIP" id="DIP-3436N"/>
<dbReference type="FunCoup" id="P56428">
    <property type="interactions" value="161"/>
</dbReference>
<dbReference type="IntAct" id="P56428">
    <property type="interactions" value="12"/>
</dbReference>
<dbReference type="MINT" id="P56428"/>
<dbReference type="STRING" id="85962.HP_0821"/>
<dbReference type="PaxDb" id="85962-C694_04205"/>
<dbReference type="EnsemblBacteria" id="AAD07868">
    <property type="protein sequence ID" value="AAD07868"/>
    <property type="gene ID" value="HP_0821"/>
</dbReference>
<dbReference type="KEGG" id="heo:C694_04205"/>
<dbReference type="KEGG" id="hpy:HP_0821"/>
<dbReference type="PATRIC" id="fig|85962.47.peg.875"/>
<dbReference type="eggNOG" id="COG0322">
    <property type="taxonomic scope" value="Bacteria"/>
</dbReference>
<dbReference type="InParanoid" id="P56428"/>
<dbReference type="OrthoDB" id="9804933at2"/>
<dbReference type="PhylomeDB" id="P56428"/>
<dbReference type="Proteomes" id="UP000000429">
    <property type="component" value="Chromosome"/>
</dbReference>
<dbReference type="GO" id="GO:0005737">
    <property type="term" value="C:cytoplasm"/>
    <property type="evidence" value="ECO:0007669"/>
    <property type="project" value="UniProtKB-SubCell"/>
</dbReference>
<dbReference type="GO" id="GO:0009380">
    <property type="term" value="C:excinuclease repair complex"/>
    <property type="evidence" value="ECO:0000318"/>
    <property type="project" value="GO_Central"/>
</dbReference>
<dbReference type="GO" id="GO:0003677">
    <property type="term" value="F:DNA binding"/>
    <property type="evidence" value="ECO:0007669"/>
    <property type="project" value="UniProtKB-UniRule"/>
</dbReference>
<dbReference type="GO" id="GO:0009381">
    <property type="term" value="F:excinuclease ABC activity"/>
    <property type="evidence" value="ECO:0007669"/>
    <property type="project" value="UniProtKB-UniRule"/>
</dbReference>
<dbReference type="GO" id="GO:0042802">
    <property type="term" value="F:identical protein binding"/>
    <property type="evidence" value="ECO:0000353"/>
    <property type="project" value="IntAct"/>
</dbReference>
<dbReference type="GO" id="GO:0006974">
    <property type="term" value="P:DNA damage response"/>
    <property type="evidence" value="ECO:0000318"/>
    <property type="project" value="GO_Central"/>
</dbReference>
<dbReference type="GO" id="GO:0006289">
    <property type="term" value="P:nucleotide-excision repair"/>
    <property type="evidence" value="ECO:0007669"/>
    <property type="project" value="UniProtKB-UniRule"/>
</dbReference>
<dbReference type="GO" id="GO:0009432">
    <property type="term" value="P:SOS response"/>
    <property type="evidence" value="ECO:0007669"/>
    <property type="project" value="UniProtKB-UniRule"/>
</dbReference>
<dbReference type="CDD" id="cd10434">
    <property type="entry name" value="GIY-YIG_UvrC_Cho"/>
    <property type="match status" value="1"/>
</dbReference>
<dbReference type="FunFam" id="3.40.1440.10:FF:000001">
    <property type="entry name" value="UvrABC system protein C"/>
    <property type="match status" value="1"/>
</dbReference>
<dbReference type="Gene3D" id="1.10.150.20">
    <property type="entry name" value="5' to 3' exonuclease, C-terminal subdomain"/>
    <property type="match status" value="1"/>
</dbReference>
<dbReference type="Gene3D" id="3.40.1440.10">
    <property type="entry name" value="GIY-YIG endonuclease"/>
    <property type="match status" value="1"/>
</dbReference>
<dbReference type="Gene3D" id="4.10.860.10">
    <property type="entry name" value="UVR domain"/>
    <property type="match status" value="1"/>
</dbReference>
<dbReference type="Gene3D" id="3.30.420.340">
    <property type="entry name" value="UvrC, RNAse H endonuclease domain"/>
    <property type="match status" value="1"/>
</dbReference>
<dbReference type="HAMAP" id="MF_00203">
    <property type="entry name" value="UvrC"/>
    <property type="match status" value="1"/>
</dbReference>
<dbReference type="InterPro" id="IPR000305">
    <property type="entry name" value="GIY-YIG_endonuc"/>
</dbReference>
<dbReference type="InterPro" id="IPR035901">
    <property type="entry name" value="GIY-YIG_endonuc_sf"/>
</dbReference>
<dbReference type="InterPro" id="IPR047296">
    <property type="entry name" value="GIY-YIG_UvrC_Cho"/>
</dbReference>
<dbReference type="InterPro" id="IPR010994">
    <property type="entry name" value="RuvA_2-like"/>
</dbReference>
<dbReference type="InterPro" id="IPR001943">
    <property type="entry name" value="UVR_dom"/>
</dbReference>
<dbReference type="InterPro" id="IPR036876">
    <property type="entry name" value="UVR_dom_sf"/>
</dbReference>
<dbReference type="InterPro" id="IPR050066">
    <property type="entry name" value="UvrABC_protein_C"/>
</dbReference>
<dbReference type="InterPro" id="IPR004791">
    <property type="entry name" value="UvrC"/>
</dbReference>
<dbReference type="InterPro" id="IPR001162">
    <property type="entry name" value="UvrC_RNase_H_dom"/>
</dbReference>
<dbReference type="InterPro" id="IPR038476">
    <property type="entry name" value="UvrC_RNase_H_dom_sf"/>
</dbReference>
<dbReference type="NCBIfam" id="TIGR00194">
    <property type="entry name" value="uvrC"/>
    <property type="match status" value="1"/>
</dbReference>
<dbReference type="PANTHER" id="PTHR30562:SF1">
    <property type="entry name" value="UVRABC SYSTEM PROTEIN C"/>
    <property type="match status" value="1"/>
</dbReference>
<dbReference type="PANTHER" id="PTHR30562">
    <property type="entry name" value="UVRC/OXIDOREDUCTASE"/>
    <property type="match status" value="1"/>
</dbReference>
<dbReference type="Pfam" id="PF01541">
    <property type="entry name" value="GIY-YIG"/>
    <property type="match status" value="1"/>
</dbReference>
<dbReference type="Pfam" id="PF02151">
    <property type="entry name" value="UVR"/>
    <property type="match status" value="1"/>
</dbReference>
<dbReference type="Pfam" id="PF22920">
    <property type="entry name" value="UvrC_RNaseH"/>
    <property type="match status" value="1"/>
</dbReference>
<dbReference type="Pfam" id="PF08459">
    <property type="entry name" value="UvrC_RNaseH_dom"/>
    <property type="match status" value="1"/>
</dbReference>
<dbReference type="SMART" id="SM00465">
    <property type="entry name" value="GIYc"/>
    <property type="match status" value="1"/>
</dbReference>
<dbReference type="SUPFAM" id="SSF46600">
    <property type="entry name" value="C-terminal UvrC-binding domain of UvrB"/>
    <property type="match status" value="1"/>
</dbReference>
<dbReference type="SUPFAM" id="SSF82771">
    <property type="entry name" value="GIY-YIG endonuclease"/>
    <property type="match status" value="1"/>
</dbReference>
<dbReference type="SUPFAM" id="SSF47781">
    <property type="entry name" value="RuvA domain 2-like"/>
    <property type="match status" value="1"/>
</dbReference>
<dbReference type="PROSITE" id="PS50164">
    <property type="entry name" value="GIY_YIG"/>
    <property type="match status" value="1"/>
</dbReference>
<dbReference type="PROSITE" id="PS50151">
    <property type="entry name" value="UVR"/>
    <property type="match status" value="1"/>
</dbReference>
<dbReference type="PROSITE" id="PS50165">
    <property type="entry name" value="UVRC"/>
    <property type="match status" value="1"/>
</dbReference>
<evidence type="ECO:0000255" key="1">
    <source>
        <dbReference type="HAMAP-Rule" id="MF_00203"/>
    </source>
</evidence>
<comment type="function">
    <text evidence="1">The UvrABC repair system catalyzes the recognition and processing of DNA lesions. UvrC both incises the 5' and 3' sides of the lesion. The N-terminal half is responsible for the 3' incision and the C-terminal half is responsible for the 5' incision.</text>
</comment>
<comment type="subunit">
    <text evidence="1">Interacts with UvrB in an incision complex.</text>
</comment>
<comment type="interaction">
    <interactant intactId="EBI-7556231">
        <id>P56428</id>
    </interactant>
    <interactant intactId="EBI-7556231">
        <id>P56428</id>
        <label>uvrC</label>
    </interactant>
    <organismsDiffer>false</organismsDiffer>
    <experiments>3</experiments>
</comment>
<comment type="subcellular location">
    <subcellularLocation>
        <location evidence="1">Cytoplasm</location>
    </subcellularLocation>
</comment>
<comment type="similarity">
    <text evidence="1">Belongs to the UvrC family.</text>
</comment>
<gene>
    <name evidence="1" type="primary">uvrC</name>
    <name type="ordered locus">HP_0821</name>
</gene>
<organism>
    <name type="scientific">Helicobacter pylori (strain ATCC 700392 / 26695)</name>
    <name type="common">Campylobacter pylori</name>
    <dbReference type="NCBI Taxonomy" id="85962"/>
    <lineage>
        <taxon>Bacteria</taxon>
        <taxon>Pseudomonadati</taxon>
        <taxon>Campylobacterota</taxon>
        <taxon>Epsilonproteobacteria</taxon>
        <taxon>Campylobacterales</taxon>
        <taxon>Helicobacteraceae</taxon>
        <taxon>Helicobacter</taxon>
    </lineage>
</organism>
<accession>P56428</accession>
<keyword id="KW-0963">Cytoplasm</keyword>
<keyword id="KW-0227">DNA damage</keyword>
<keyword id="KW-0228">DNA excision</keyword>
<keyword id="KW-0234">DNA repair</keyword>
<keyword id="KW-0267">Excision nuclease</keyword>
<keyword id="KW-1185">Reference proteome</keyword>
<keyword id="KW-0742">SOS response</keyword>